<dbReference type="EC" id="2.4.-.-"/>
<dbReference type="EMBL" id="Z71928">
    <property type="protein sequence ID" value="CAA96473.1"/>
    <property type="molecule type" value="Genomic_DNA"/>
</dbReference>
<dbReference type="EMBL" id="Z94043">
    <property type="protein sequence ID" value="CAB08028.1"/>
    <property type="molecule type" value="Genomic_DNA"/>
</dbReference>
<dbReference type="EMBL" id="AL009126">
    <property type="protein sequence ID" value="CAB15437.1"/>
    <property type="molecule type" value="Genomic_DNA"/>
</dbReference>
<dbReference type="PIR" id="E70036">
    <property type="entry name" value="E70036"/>
</dbReference>
<dbReference type="RefSeq" id="NP_391312.1">
    <property type="nucleotide sequence ID" value="NC_000964.3"/>
</dbReference>
<dbReference type="RefSeq" id="WP_003228257.1">
    <property type="nucleotide sequence ID" value="NZ_OZ025638.1"/>
</dbReference>
<dbReference type="SMR" id="P71055"/>
<dbReference type="FunCoup" id="P71055">
    <property type="interactions" value="31"/>
</dbReference>
<dbReference type="STRING" id="224308.BSU34320"/>
<dbReference type="CAZy" id="GT4">
    <property type="family name" value="Glycosyltransferase Family 4"/>
</dbReference>
<dbReference type="PaxDb" id="224308-BSU34320"/>
<dbReference type="DNASU" id="938631"/>
<dbReference type="EnsemblBacteria" id="CAB15437">
    <property type="protein sequence ID" value="CAB15437"/>
    <property type="gene ID" value="BSU_34320"/>
</dbReference>
<dbReference type="GeneID" id="938631"/>
<dbReference type="KEGG" id="bsu:BSU34320"/>
<dbReference type="PATRIC" id="fig|224308.179.peg.3718"/>
<dbReference type="eggNOG" id="COG0438">
    <property type="taxonomic scope" value="Bacteria"/>
</dbReference>
<dbReference type="InParanoid" id="P71055"/>
<dbReference type="OrthoDB" id="9804196at2"/>
<dbReference type="PhylomeDB" id="P71055"/>
<dbReference type="BioCyc" id="BSUB:BSU34320-MONOMER"/>
<dbReference type="Proteomes" id="UP000001570">
    <property type="component" value="Chromosome"/>
</dbReference>
<dbReference type="GO" id="GO:0016757">
    <property type="term" value="F:glycosyltransferase activity"/>
    <property type="evidence" value="ECO:0007669"/>
    <property type="project" value="UniProtKB-KW"/>
</dbReference>
<dbReference type="GO" id="GO:0000271">
    <property type="term" value="P:polysaccharide biosynthetic process"/>
    <property type="evidence" value="ECO:0007669"/>
    <property type="project" value="UniProtKB-KW"/>
</dbReference>
<dbReference type="CDD" id="cd03812">
    <property type="entry name" value="GT4_CapH-like"/>
    <property type="match status" value="1"/>
</dbReference>
<dbReference type="Gene3D" id="3.40.50.2000">
    <property type="entry name" value="Glycogen Phosphorylase B"/>
    <property type="match status" value="2"/>
</dbReference>
<dbReference type="InterPro" id="IPR001296">
    <property type="entry name" value="Glyco_trans_1"/>
</dbReference>
<dbReference type="InterPro" id="IPR028098">
    <property type="entry name" value="Glyco_trans_4-like_N"/>
</dbReference>
<dbReference type="InterPro" id="IPR050194">
    <property type="entry name" value="Glycosyltransferase_grp1"/>
</dbReference>
<dbReference type="PANTHER" id="PTHR45947">
    <property type="entry name" value="SULFOQUINOVOSYL TRANSFERASE SQD2"/>
    <property type="match status" value="1"/>
</dbReference>
<dbReference type="PANTHER" id="PTHR45947:SF3">
    <property type="entry name" value="SULFOQUINOVOSYL TRANSFERASE SQD2"/>
    <property type="match status" value="1"/>
</dbReference>
<dbReference type="Pfam" id="PF13579">
    <property type="entry name" value="Glyco_trans_4_4"/>
    <property type="match status" value="1"/>
</dbReference>
<dbReference type="Pfam" id="PF00534">
    <property type="entry name" value="Glycos_transf_1"/>
    <property type="match status" value="1"/>
</dbReference>
<dbReference type="SUPFAM" id="SSF53756">
    <property type="entry name" value="UDP-Glycosyltransferase/glycogen phosphorylase"/>
    <property type="match status" value="1"/>
</dbReference>
<gene>
    <name type="primary">epsF</name>
    <name type="synonym">yveP</name>
    <name type="ordered locus">BSU34320</name>
</gene>
<accession>P71055</accession>
<accession>O08174</accession>
<accession>Q795I4</accession>
<name>EPSF_BACSU</name>
<keyword id="KW-0270">Exopolysaccharide synthesis</keyword>
<keyword id="KW-0328">Glycosyltransferase</keyword>
<keyword id="KW-1185">Reference proteome</keyword>
<keyword id="KW-0808">Transferase</keyword>
<organism>
    <name type="scientific">Bacillus subtilis (strain 168)</name>
    <dbReference type="NCBI Taxonomy" id="224308"/>
    <lineage>
        <taxon>Bacteria</taxon>
        <taxon>Bacillati</taxon>
        <taxon>Bacillota</taxon>
        <taxon>Bacilli</taxon>
        <taxon>Bacillales</taxon>
        <taxon>Bacillaceae</taxon>
        <taxon>Bacillus</taxon>
    </lineage>
</organism>
<reference key="1">
    <citation type="journal article" date="1996" name="Microbiology">
        <title>Integrated mapping and sequencing of a 115 kb DNA fragment from Bacillus subtilis: sequence analysis of a 21 kb segment containing the sigL locus.</title>
        <authorList>
            <person name="Fabret C."/>
            <person name="Quentin Y."/>
            <person name="Chapal N."/>
            <person name="Guiseppi A."/>
            <person name="Haiech J."/>
            <person name="Denizot F."/>
        </authorList>
    </citation>
    <scope>NUCLEOTIDE SEQUENCE [GENOMIC DNA]</scope>
    <source>
        <strain>168trp</strain>
    </source>
</reference>
<reference key="2">
    <citation type="submission" date="1997-04" db="EMBL/GenBank/DDBJ databases">
        <authorList>
            <person name="Denizot F."/>
        </authorList>
    </citation>
    <scope>NUCLEOTIDE SEQUENCE [GENOMIC DNA]</scope>
</reference>
<reference key="3">
    <citation type="journal article" date="1997" name="Nature">
        <title>The complete genome sequence of the Gram-positive bacterium Bacillus subtilis.</title>
        <authorList>
            <person name="Kunst F."/>
            <person name="Ogasawara N."/>
            <person name="Moszer I."/>
            <person name="Albertini A.M."/>
            <person name="Alloni G."/>
            <person name="Azevedo V."/>
            <person name="Bertero M.G."/>
            <person name="Bessieres P."/>
            <person name="Bolotin A."/>
            <person name="Borchert S."/>
            <person name="Borriss R."/>
            <person name="Boursier L."/>
            <person name="Brans A."/>
            <person name="Braun M."/>
            <person name="Brignell S.C."/>
            <person name="Bron S."/>
            <person name="Brouillet S."/>
            <person name="Bruschi C.V."/>
            <person name="Caldwell B."/>
            <person name="Capuano V."/>
            <person name="Carter N.M."/>
            <person name="Choi S.-K."/>
            <person name="Codani J.-J."/>
            <person name="Connerton I.F."/>
            <person name="Cummings N.J."/>
            <person name="Daniel R.A."/>
            <person name="Denizot F."/>
            <person name="Devine K.M."/>
            <person name="Duesterhoeft A."/>
            <person name="Ehrlich S.D."/>
            <person name="Emmerson P.T."/>
            <person name="Entian K.-D."/>
            <person name="Errington J."/>
            <person name="Fabret C."/>
            <person name="Ferrari E."/>
            <person name="Foulger D."/>
            <person name="Fritz C."/>
            <person name="Fujita M."/>
            <person name="Fujita Y."/>
            <person name="Fuma S."/>
            <person name="Galizzi A."/>
            <person name="Galleron N."/>
            <person name="Ghim S.-Y."/>
            <person name="Glaser P."/>
            <person name="Goffeau A."/>
            <person name="Golightly E.J."/>
            <person name="Grandi G."/>
            <person name="Guiseppi G."/>
            <person name="Guy B.J."/>
            <person name="Haga K."/>
            <person name="Haiech J."/>
            <person name="Harwood C.R."/>
            <person name="Henaut A."/>
            <person name="Hilbert H."/>
            <person name="Holsappel S."/>
            <person name="Hosono S."/>
            <person name="Hullo M.-F."/>
            <person name="Itaya M."/>
            <person name="Jones L.-M."/>
            <person name="Joris B."/>
            <person name="Karamata D."/>
            <person name="Kasahara Y."/>
            <person name="Klaerr-Blanchard M."/>
            <person name="Klein C."/>
            <person name="Kobayashi Y."/>
            <person name="Koetter P."/>
            <person name="Koningstein G."/>
            <person name="Krogh S."/>
            <person name="Kumano M."/>
            <person name="Kurita K."/>
            <person name="Lapidus A."/>
            <person name="Lardinois S."/>
            <person name="Lauber J."/>
            <person name="Lazarevic V."/>
            <person name="Lee S.-M."/>
            <person name="Levine A."/>
            <person name="Liu H."/>
            <person name="Masuda S."/>
            <person name="Mauel C."/>
            <person name="Medigue C."/>
            <person name="Medina N."/>
            <person name="Mellado R.P."/>
            <person name="Mizuno M."/>
            <person name="Moestl D."/>
            <person name="Nakai S."/>
            <person name="Noback M."/>
            <person name="Noone D."/>
            <person name="O'Reilly M."/>
            <person name="Ogawa K."/>
            <person name="Ogiwara A."/>
            <person name="Oudega B."/>
            <person name="Park S.-H."/>
            <person name="Parro V."/>
            <person name="Pohl T.M."/>
            <person name="Portetelle D."/>
            <person name="Porwollik S."/>
            <person name="Prescott A.M."/>
            <person name="Presecan E."/>
            <person name="Pujic P."/>
            <person name="Purnelle B."/>
            <person name="Rapoport G."/>
            <person name="Rey M."/>
            <person name="Reynolds S."/>
            <person name="Rieger M."/>
            <person name="Rivolta C."/>
            <person name="Rocha E."/>
            <person name="Roche B."/>
            <person name="Rose M."/>
            <person name="Sadaie Y."/>
            <person name="Sato T."/>
            <person name="Scanlan E."/>
            <person name="Schleich S."/>
            <person name="Schroeter R."/>
            <person name="Scoffone F."/>
            <person name="Sekiguchi J."/>
            <person name="Sekowska A."/>
            <person name="Seror S.J."/>
            <person name="Serror P."/>
            <person name="Shin B.-S."/>
            <person name="Soldo B."/>
            <person name="Sorokin A."/>
            <person name="Tacconi E."/>
            <person name="Takagi T."/>
            <person name="Takahashi H."/>
            <person name="Takemaru K."/>
            <person name="Takeuchi M."/>
            <person name="Tamakoshi A."/>
            <person name="Tanaka T."/>
            <person name="Terpstra P."/>
            <person name="Tognoni A."/>
            <person name="Tosato V."/>
            <person name="Uchiyama S."/>
            <person name="Vandenbol M."/>
            <person name="Vannier F."/>
            <person name="Vassarotti A."/>
            <person name="Viari A."/>
            <person name="Wambutt R."/>
            <person name="Wedler E."/>
            <person name="Wedler H."/>
            <person name="Weitzenegger T."/>
            <person name="Winters P."/>
            <person name="Wipat A."/>
            <person name="Yamamoto H."/>
            <person name="Yamane K."/>
            <person name="Yasumoto K."/>
            <person name="Yata K."/>
            <person name="Yoshida K."/>
            <person name="Yoshikawa H.-F."/>
            <person name="Zumstein E."/>
            <person name="Yoshikawa H."/>
            <person name="Danchin A."/>
        </authorList>
    </citation>
    <scope>NUCLEOTIDE SEQUENCE [LARGE SCALE GENOMIC DNA]</scope>
    <source>
        <strain>168</strain>
    </source>
</reference>
<reference key="4">
    <citation type="journal article" date="2004" name="J. Bacteriol.">
        <title>Genes involved in formation of structured multicellular communities by Bacillus subtilis.</title>
        <authorList>
            <person name="Branda S.S."/>
            <person name="Gonzalez-Pastor J.E."/>
            <person name="Dervyn E."/>
            <person name="Ehrlich S.D."/>
            <person name="Losick R."/>
            <person name="Kolter R."/>
        </authorList>
    </citation>
    <scope>PROBABLE FUNCTION</scope>
</reference>
<reference key="5">
    <citation type="journal article" date="2005" name="Mol. Microbiol.">
        <title>A master regulator for biofilm formation by Bacillus subtilis.</title>
        <authorList>
            <person name="Kearns D.B."/>
            <person name="Chu F."/>
            <person name="Branda S.S."/>
            <person name="Kolter R."/>
            <person name="Losick R."/>
        </authorList>
    </citation>
    <scope>PROBABLE FUNCTION</scope>
    <scope>INDUCTION</scope>
    <scope>NOMENCLATURE</scope>
</reference>
<protein>
    <recommendedName>
        <fullName>Putative glycosyltransferase EpsF</fullName>
        <ecNumber>2.4.-.-</ecNumber>
    </recommendedName>
</protein>
<evidence type="ECO:0000269" key="1">
    <source>
    </source>
</evidence>
<evidence type="ECO:0000305" key="2"/>
<proteinExistence type="evidence at transcript level"/>
<comment type="function">
    <text>May be involved in the production of the exopolysaccharide (EPS) component of the extracellular matrix during biofilm formation. EPS is responsible for the adhesion of chains of cells into bundles. Required for biofilm maintenance.</text>
</comment>
<comment type="induction">
    <text evidence="1">Repressed by SinR.</text>
</comment>
<comment type="similarity">
    <text evidence="2">Belongs to the glycosyltransferase group 1 family. Glycosyltransferase 4 subfamily.</text>
</comment>
<feature type="chain" id="PRO_0000360693" description="Putative glycosyltransferase EpsF">
    <location>
        <begin position="1"/>
        <end position="384"/>
    </location>
</feature>
<sequence length="384" mass="42623">MNSSQKRVLHVLSGMNRGGAETMVMNLYRKMDKSKVQFDFLTYRNDPCAYDEEILSLGGRLFYVPSIGQSNPLTFVRNVRNAIKENGPFSAVHAHTDFQTGFIALAARLAGVPVRVCHSHNTSWKTGFNWKDRLQLLVFRRLILANATALCACGEDAGRFLFGQSNMERERVHLLPNGIDLELFAPNGQAADEEKAARGIAADRLIIGHVARFHEVKNHAFLLKLAAHLKERGIRFQLVLAGDGPLCGEIEEEARQQNLLSDVLFLGTEERIHELMRTFDVFVMPSLYEGLPVVLVEAQASGLPCIISDSITEKVDAGLGLVTRLSLSEPISVWAETIARAAAAGRPKREFIKETLAQLGYDAQQNVGALLNVYNISTEKDHNR</sequence>